<organism>
    <name type="scientific">Escherichia coli O157:H7</name>
    <dbReference type="NCBI Taxonomy" id="83334"/>
    <lineage>
        <taxon>Bacteria</taxon>
        <taxon>Pseudomonadati</taxon>
        <taxon>Pseudomonadota</taxon>
        <taxon>Gammaproteobacteria</taxon>
        <taxon>Enterobacterales</taxon>
        <taxon>Enterobacteriaceae</taxon>
        <taxon>Escherichia</taxon>
    </lineage>
</organism>
<name>ESPFU_ECO57</name>
<gene>
    <name type="primary">espF(U)</name>
    <name type="synonym">tccP</name>
    <name type="ordered locus">Z3072</name>
</gene>
<evidence type="ECO:0000256" key="1">
    <source>
        <dbReference type="SAM" id="MobiDB-lite"/>
    </source>
</evidence>
<evidence type="ECO:0000269" key="2">
    <source>
    </source>
</evidence>
<evidence type="ECO:0000269" key="3">
    <source>
    </source>
</evidence>
<evidence type="ECO:0000269" key="4">
    <source>
    </source>
</evidence>
<evidence type="ECO:0000269" key="5">
    <source>
    </source>
</evidence>
<evidence type="ECO:0000269" key="6">
    <source>
    </source>
</evidence>
<evidence type="ECO:0000305" key="7"/>
<proteinExistence type="evidence at protein level"/>
<accession>Q8X482</accession>
<keyword id="KW-1035">Host cytoplasm</keyword>
<keyword id="KW-0677">Repeat</keyword>
<keyword id="KW-0964">Secreted</keyword>
<keyword id="KW-0843">Virulence</keyword>
<protein>
    <recommendedName>
        <fullName>Secreted effector protein EspF(U)</fullName>
    </recommendedName>
    <alternativeName>
        <fullName>EspF-like protein encoded on prophage U</fullName>
    </alternativeName>
    <alternativeName>
        <fullName>Tir-cytoskeleton coupling protein TccP</fullName>
    </alternativeName>
</protein>
<feature type="chain" id="PRO_0000413983" description="Secreted effector protein EspF(U)">
    <location>
        <begin position="1"/>
        <end position="384"/>
    </location>
</feature>
<feature type="repeat" description="1">
    <location>
        <begin position="96"/>
        <end position="142"/>
    </location>
</feature>
<feature type="repeat" description="2">
    <location>
        <begin position="143"/>
        <end position="189"/>
    </location>
</feature>
<feature type="repeat" description="3">
    <location>
        <begin position="190"/>
        <end position="236"/>
    </location>
</feature>
<feature type="repeat" description="4">
    <location>
        <begin position="237"/>
        <end position="283"/>
    </location>
</feature>
<feature type="repeat" description="5">
    <location>
        <begin position="284"/>
        <end position="330"/>
    </location>
</feature>
<feature type="repeat" description="6">
    <location>
        <begin position="331"/>
        <end position="377"/>
    </location>
</feature>
<feature type="region of interest" description="6 X 48 AA approximate tandem repeats">
    <location>
        <begin position="96"/>
        <end position="377"/>
    </location>
</feature>
<feature type="region of interest" description="Disordered" evidence="1">
    <location>
        <begin position="247"/>
        <end position="266"/>
    </location>
</feature>
<feature type="compositionally biased region" description="Pro residues" evidence="1">
    <location>
        <begin position="248"/>
        <end position="260"/>
    </location>
</feature>
<sequence length="384" mass="42474">MINNVSSLFPTVNRNITAVYKKSSFSVSPQKITLNPVKISSPFSPSSSSISATTLFRAPNAHSASFHRQSTAESSLHQQLPNVRQRLIQHLAEHGIXPARSMAEHIPPAPKWPAPPPPVQNEQSRPLPDVAQRLMQHLAEHGIQPARNMAEHIPPAPNWPAPTPPVQNEQSRPLPDVAQRLMQHLAEHGIQPARNMAEHIPPAPXWXAPTPPVQNEQSRPLPDVAQRLMQHLAEHGIZPARSMAEHIPPAPNWPAPPPPVQNEQSRPLPDVAQRLXQHLAEHGIQPARNMAEHIPPAPNWPAPXXPVXNEQSRPLXDVAXRLMQHLAEHGIQPARNMAEHIPPAPNWXAPTPPVQNEQSRPLPDVAQRLMQHLAEHGINTSKRS</sequence>
<comment type="function">
    <text evidence="2 3 5">Required for efficient pedestal formation in host epithelial cells during infection. Acts as an intermediate between Tir (via host BAIAP2) and host WASL/N-WASP. Directly binds and activates WASL/N-WASP, which stimulates actin polymerization and leads to the formation of actin pedestals at the sites of bacterial adhesion.</text>
</comment>
<comment type="subunit">
    <text evidence="2 3 4 6">Interacts with host BAIAP2 and host WASL/N-WASP. Can also interact with host proteins BAIAP2L1 and WAS/WASP.</text>
</comment>
<comment type="interaction">
    <interactant intactId="EBI-22229752">
        <id>Q8X482</id>
    </interactant>
    <interactant intactId="EBI-397955">
        <id>Q60598</id>
        <label>Cttn</label>
    </interactant>
    <organismsDiffer>true</organismsDiffer>
    <experiments>6</experiments>
</comment>
<comment type="interaction">
    <interactant intactId="EBI-22229752">
        <id>Q8X482</id>
    </interactant>
    <interactant intactId="EBI-4403262">
        <id>Q5T0N5-3</id>
        <label>FNBP1L</label>
    </interactant>
    <organismsDiffer>true</organismsDiffer>
    <experiments>3</experiments>
</comment>
<comment type="interaction">
    <interactant intactId="EBI-22229752">
        <id>Q8X482</id>
    </interactant>
    <interactant intactId="EBI-957615">
        <id>O00401</id>
        <label>WASL</label>
    </interactant>
    <organismsDiffer>true</organismsDiffer>
    <experiments>5</experiments>
</comment>
<comment type="interaction">
    <interactant intactId="EBI-22229752">
        <id>Q8X482</id>
    </interactant>
    <interactant intactId="EBI-6142604">
        <id>O08816</id>
        <label>Wasl</label>
    </interactant>
    <organismsDiffer>true</organismsDiffer>
    <experiments>5</experiments>
</comment>
<comment type="subcellular location">
    <subcellularLocation>
        <location evidence="2 3">Secreted</location>
    </subcellularLocation>
    <subcellularLocation>
        <location evidence="3">Host cytoplasm</location>
    </subcellularLocation>
    <text evidence="2 3">Secreted via the type III secretion system (T3SS) (PubMed:15296718, PubMed:15527496). In host cells, localizes to the tip of the actin pedestal (PubMed:15296718, PubMed:15527496).</text>
</comment>
<comment type="domain">
    <text evidence="2 4 5 6">The N-terminal 21 amino acids are necessary and sufficient for translocation into the host cell. The C-terminal region, composed of several highly conserved proline-rich repeats, interacts with the SH3 domain of BAIAP2 and BAIAP2L1, and the GTPase binding domain (GBD) of WASL/N-WASP and WAS/WASP. The N-terminal translocation signal and two proline-rich repeats are sufficient for triggering actin polymerization, but each additional repeat gives higher activity.</text>
</comment>
<comment type="disruption phenotype">
    <text evidence="2 3">Mutants show dramatic reduction in the efficiency of pedestal formation and in the intensity of the residual pedestals that are formed.</text>
</comment>
<comment type="similarity">
    <text evidence="7">Belongs to the EspF(U)/TccP family.</text>
</comment>
<dbReference type="EMBL" id="AE005174">
    <property type="protein sequence ID" value="AAG56991.1"/>
    <property type="molecule type" value="Genomic_DNA"/>
</dbReference>
<dbReference type="PIR" id="C85816">
    <property type="entry name" value="C85816"/>
</dbReference>
<dbReference type="IntAct" id="Q8X482">
    <property type="interactions" value="10"/>
</dbReference>
<dbReference type="MINT" id="Q8X482"/>
<dbReference type="KEGG" id="ece:Z3072"/>
<dbReference type="PHI-base" id="PHI:10376"/>
<dbReference type="Proteomes" id="UP000002519">
    <property type="component" value="Chromosome"/>
</dbReference>
<dbReference type="GO" id="GO:0005576">
    <property type="term" value="C:extracellular region"/>
    <property type="evidence" value="ECO:0007669"/>
    <property type="project" value="UniProtKB-SubCell"/>
</dbReference>
<dbReference type="GO" id="GO:0030430">
    <property type="term" value="C:host cell cytoplasm"/>
    <property type="evidence" value="ECO:0000314"/>
    <property type="project" value="UniProtKB"/>
</dbReference>
<dbReference type="FunFam" id="6.10.250.3330:FF:000001">
    <property type="entry name" value="Secreted effector protein EspF(U)"/>
    <property type="match status" value="2"/>
</dbReference>
<dbReference type="Gene3D" id="6.10.250.3330">
    <property type="entry name" value="TccP2/EspF(U)-like"/>
    <property type="match status" value="7"/>
</dbReference>
<dbReference type="InterPro" id="IPR006891">
    <property type="entry name" value="T3SS_EspF"/>
</dbReference>
<dbReference type="InterPro" id="IPR044889">
    <property type="entry name" value="TccP2/EspF(U)-like_sf"/>
</dbReference>
<dbReference type="Pfam" id="PF04806">
    <property type="entry name" value="EspF"/>
    <property type="match status" value="7"/>
</dbReference>
<reference key="1">
    <citation type="journal article" date="2001" name="Nature">
        <title>Genome sequence of enterohaemorrhagic Escherichia coli O157:H7.</title>
        <authorList>
            <person name="Perna N.T."/>
            <person name="Plunkett G. III"/>
            <person name="Burland V."/>
            <person name="Mau B."/>
            <person name="Glasner J.D."/>
            <person name="Rose D.J."/>
            <person name="Mayhew G.F."/>
            <person name="Evans P.S."/>
            <person name="Gregor J."/>
            <person name="Kirkpatrick H.A."/>
            <person name="Posfai G."/>
            <person name="Hackett J."/>
            <person name="Klink S."/>
            <person name="Boutin A."/>
            <person name="Shao Y."/>
            <person name="Miller L."/>
            <person name="Grotbeck E.J."/>
            <person name="Davis N.W."/>
            <person name="Lim A."/>
            <person name="Dimalanta E.T."/>
            <person name="Potamousis K."/>
            <person name="Apodaca J."/>
            <person name="Anantharaman T.S."/>
            <person name="Lin J."/>
            <person name="Yen G."/>
            <person name="Schwartz D.C."/>
            <person name="Welch R.A."/>
            <person name="Blattner F.R."/>
        </authorList>
    </citation>
    <scope>NUCLEOTIDE SEQUENCE [LARGE SCALE GENOMIC DNA]</scope>
    <source>
        <strain>O157:H7 / EDL933 / ATCC 700927 / EHEC</strain>
    </source>
</reference>
<reference key="2">
    <citation type="journal article" date="2004" name="Cell. Microbiol.">
        <title>TccP is an enterohaemorrhagic Escherichia coli O157:H7 type III effector protein that couples Tir to the actin-cytoskeleton.</title>
        <authorList>
            <person name="Garmendia J."/>
            <person name="Phillips A.D."/>
            <person name="Carlier M.F."/>
            <person name="Chong Y."/>
            <person name="Schuller S."/>
            <person name="Marches O."/>
            <person name="Dahan S."/>
            <person name="Oswald E."/>
            <person name="Shaw R.K."/>
            <person name="Knutton S."/>
            <person name="Frankel G."/>
        </authorList>
    </citation>
    <scope>FUNCTION</scope>
    <scope>INTERACTION WITH WASL/N-WASP</scope>
    <scope>SUBCELLULAR LOCATION</scope>
    <scope>SECRETION VIA TYPE III SECRETION SYSTEM</scope>
    <scope>DISRUPTION PHENOTYPE</scope>
    <scope>GENE NAME</scope>
    <source>
        <strain>O157:H7 / EDL933 / ATCC 700927 / EHEC</strain>
    </source>
</reference>
<reference key="3">
    <citation type="journal article" date="2004" name="Dev. Cell">
        <title>EspFU is a translocated EHEC effector that interacts with Tir and N-WASP and promotes Nck-independent actin assembly.</title>
        <authorList>
            <person name="Campellone K.G."/>
            <person name="Robbins D."/>
            <person name="Leong J.M."/>
        </authorList>
    </citation>
    <scope>FUNCTION</scope>
    <scope>INTERACTION WITH WASL/N-WASP</scope>
    <scope>SUBCELLULAR LOCATION</scope>
    <scope>SECRETION VIA TYPE III SECRETION SYSTEM</scope>
    <scope>DOMAIN</scope>
    <scope>DISRUPTION PHENOTYPE</scope>
    <scope>GENE NAME</scope>
    <source>
        <strain>O157:H7 / EDL933 / ATCC 700927 / EHEC</strain>
    </source>
</reference>
<reference key="4">
    <citation type="journal article" date="2006" name="Cell. Microbiol.">
        <title>Characterization of TccP-mediated N-WASP activation during enterohaemorrhagic Escherichia coli infection.</title>
        <authorList>
            <person name="Garmendia J."/>
            <person name="Carlier M.F."/>
            <person name="Egile C."/>
            <person name="Didry D."/>
            <person name="Frankel G."/>
        </authorList>
    </citation>
    <scope>INTERACTION WITH WASL/N-WASP</scope>
    <scope>SECRETION VIA TYPE III SECRETION SYSTEM</scope>
    <scope>DOMAIN</scope>
    <source>
        <strain>O157:H7 / EDL933 / ATCC 700927 / EHEC</strain>
    </source>
</reference>
<reference key="5">
    <citation type="journal article" date="2008" name="Nature">
        <title>The pathogen protein EspF(U) hijacks actin polymerization using mimicry and multivalency.</title>
        <authorList>
            <person name="Sallee N.A."/>
            <person name="Rivera G.M."/>
            <person name="Dueber J.E."/>
            <person name="Vasilescu D."/>
            <person name="Mullins R.D."/>
            <person name="Mayer B.J."/>
            <person name="Lim W.A."/>
        </authorList>
    </citation>
    <scope>FUNCTION</scope>
    <scope>DOMAIN</scope>
    <source>
        <strain>O157:H7 / EHEC</strain>
    </source>
</reference>
<reference key="6">
    <citation type="journal article" date="2009" name="Cell Host Microbe">
        <title>IRSp53 links the enterohemorrhagic E. coli effectors Tir and EspFU for actin pedestal formation.</title>
        <authorList>
            <person name="Weiss S.M."/>
            <person name="Ladwein M."/>
            <person name="Schmidt D."/>
            <person name="Ehinger J."/>
            <person name="Lommel S."/>
            <person name="Stading K."/>
            <person name="Beutling U."/>
            <person name="Disanza A."/>
            <person name="Frank R."/>
            <person name="Jansch L."/>
            <person name="Scita G."/>
            <person name="Gunzer F."/>
            <person name="Rottner K."/>
            <person name="Stradal T.E."/>
        </authorList>
    </citation>
    <scope>INTERACTION WITH BAIAP2 AND BAIAP2L1</scope>
    <scope>DOMAIN</scope>
    <source>
        <strain>O157:H7 / 86-24 / EHEC</strain>
        <strain>O157:H7 / EDL933 / ATCC 700927 / EHEC</strain>
    </source>
</reference>